<keyword id="KW-0997">Cell inner membrane</keyword>
<keyword id="KW-1003">Cell membrane</keyword>
<keyword id="KW-0407">Ion channel</keyword>
<keyword id="KW-0406">Ion transport</keyword>
<keyword id="KW-0472">Membrane</keyword>
<keyword id="KW-0479">Metal-binding</keyword>
<keyword id="KW-0915">Sodium</keyword>
<keyword id="KW-0812">Transmembrane</keyword>
<keyword id="KW-1133">Transmembrane helix</keyword>
<keyword id="KW-0813">Transport</keyword>
<sequence>MIGVTLAVAVGGALGCLLRFATSNWISAHWPQHFYAATLAVNIAGCLLIGYLYGQFLLRPEVPLALRAGLIAGFLGGLTTFSSFSLDTLRLLESGQAPLAFSYLAFSVLGGLLATWAGLILTKL</sequence>
<protein>
    <recommendedName>
        <fullName evidence="1">Fluoride-specific ion channel FluC</fullName>
    </recommendedName>
</protein>
<reference key="1">
    <citation type="journal article" date="2009" name="J. Bacteriol.">
        <title>Genome sequence of Azotobacter vinelandii, an obligate aerobe specialized to support diverse anaerobic metabolic processes.</title>
        <authorList>
            <person name="Setubal J.C."/>
            <person name="Dos Santos P."/>
            <person name="Goldman B.S."/>
            <person name="Ertesvaag H."/>
            <person name="Espin G."/>
            <person name="Rubio L.M."/>
            <person name="Valla S."/>
            <person name="Almeida N.F."/>
            <person name="Balasubramanian D."/>
            <person name="Cromes L."/>
            <person name="Curatti L."/>
            <person name="Du Z."/>
            <person name="Godsy E."/>
            <person name="Goodner B."/>
            <person name="Hellner-Burris K."/>
            <person name="Hernandez J.A."/>
            <person name="Houmiel K."/>
            <person name="Imperial J."/>
            <person name="Kennedy C."/>
            <person name="Larson T.J."/>
            <person name="Latreille P."/>
            <person name="Ligon L.S."/>
            <person name="Lu J."/>
            <person name="Maerk M."/>
            <person name="Miller N.M."/>
            <person name="Norton S."/>
            <person name="O'Carroll I.P."/>
            <person name="Paulsen I."/>
            <person name="Raulfs E.C."/>
            <person name="Roemer R."/>
            <person name="Rosser J."/>
            <person name="Segura D."/>
            <person name="Slater S."/>
            <person name="Stricklin S.L."/>
            <person name="Studholme D.J."/>
            <person name="Sun J."/>
            <person name="Viana C.J."/>
            <person name="Wallin E."/>
            <person name="Wang B."/>
            <person name="Wheeler C."/>
            <person name="Zhu H."/>
            <person name="Dean D.R."/>
            <person name="Dixon R."/>
            <person name="Wood D."/>
        </authorList>
    </citation>
    <scope>NUCLEOTIDE SEQUENCE [LARGE SCALE GENOMIC DNA]</scope>
    <source>
        <strain>DJ / ATCC BAA-1303</strain>
    </source>
</reference>
<dbReference type="EMBL" id="CP001157">
    <property type="protein sequence ID" value="ACO78991.1"/>
    <property type="molecule type" value="Genomic_DNA"/>
</dbReference>
<dbReference type="RefSeq" id="WP_012701379.1">
    <property type="nucleotide sequence ID" value="NC_012560.1"/>
</dbReference>
<dbReference type="SMR" id="C1DKY9"/>
<dbReference type="STRING" id="322710.Avin_28190"/>
<dbReference type="EnsemblBacteria" id="ACO78991">
    <property type="protein sequence ID" value="ACO78991"/>
    <property type="gene ID" value="Avin_28190"/>
</dbReference>
<dbReference type="GeneID" id="88185937"/>
<dbReference type="KEGG" id="avn:Avin_28190"/>
<dbReference type="eggNOG" id="COG0239">
    <property type="taxonomic scope" value="Bacteria"/>
</dbReference>
<dbReference type="HOGENOM" id="CLU_114342_3_0_6"/>
<dbReference type="OrthoDB" id="9806299at2"/>
<dbReference type="Proteomes" id="UP000002424">
    <property type="component" value="Chromosome"/>
</dbReference>
<dbReference type="GO" id="GO:0005886">
    <property type="term" value="C:plasma membrane"/>
    <property type="evidence" value="ECO:0007669"/>
    <property type="project" value="UniProtKB-SubCell"/>
</dbReference>
<dbReference type="GO" id="GO:0062054">
    <property type="term" value="F:fluoride channel activity"/>
    <property type="evidence" value="ECO:0007669"/>
    <property type="project" value="UniProtKB-UniRule"/>
</dbReference>
<dbReference type="GO" id="GO:0046872">
    <property type="term" value="F:metal ion binding"/>
    <property type="evidence" value="ECO:0007669"/>
    <property type="project" value="UniProtKB-KW"/>
</dbReference>
<dbReference type="GO" id="GO:0140114">
    <property type="term" value="P:cellular detoxification of fluoride"/>
    <property type="evidence" value="ECO:0007669"/>
    <property type="project" value="UniProtKB-UniRule"/>
</dbReference>
<dbReference type="HAMAP" id="MF_00454">
    <property type="entry name" value="FluC"/>
    <property type="match status" value="1"/>
</dbReference>
<dbReference type="InterPro" id="IPR003691">
    <property type="entry name" value="FluC"/>
</dbReference>
<dbReference type="NCBIfam" id="NF010830">
    <property type="entry name" value="PRK14234.1"/>
    <property type="match status" value="1"/>
</dbReference>
<dbReference type="PANTHER" id="PTHR28259">
    <property type="entry name" value="FLUORIDE EXPORT PROTEIN 1-RELATED"/>
    <property type="match status" value="1"/>
</dbReference>
<dbReference type="PANTHER" id="PTHR28259:SF1">
    <property type="entry name" value="FLUORIDE EXPORT PROTEIN 1-RELATED"/>
    <property type="match status" value="1"/>
</dbReference>
<dbReference type="Pfam" id="PF02537">
    <property type="entry name" value="CRCB"/>
    <property type="match status" value="1"/>
</dbReference>
<accession>C1DKY9</accession>
<name>FLUC_AZOVD</name>
<evidence type="ECO:0000255" key="1">
    <source>
        <dbReference type="HAMAP-Rule" id="MF_00454"/>
    </source>
</evidence>
<gene>
    <name evidence="1" type="primary">fluC</name>
    <name evidence="1" type="synonym">crcB</name>
    <name type="ordered locus">Avin_28190</name>
</gene>
<feature type="chain" id="PRO_1000206244" description="Fluoride-specific ion channel FluC">
    <location>
        <begin position="1"/>
        <end position="124"/>
    </location>
</feature>
<feature type="transmembrane region" description="Helical" evidence="1">
    <location>
        <begin position="1"/>
        <end position="21"/>
    </location>
</feature>
<feature type="transmembrane region" description="Helical" evidence="1">
    <location>
        <begin position="34"/>
        <end position="54"/>
    </location>
</feature>
<feature type="transmembrane region" description="Helical" evidence="1">
    <location>
        <begin position="62"/>
        <end position="82"/>
    </location>
</feature>
<feature type="transmembrane region" description="Helical" evidence="1">
    <location>
        <begin position="101"/>
        <end position="121"/>
    </location>
</feature>
<feature type="binding site" evidence="1">
    <location>
        <position position="76"/>
    </location>
    <ligand>
        <name>Na(+)</name>
        <dbReference type="ChEBI" id="CHEBI:29101"/>
        <note>structural</note>
    </ligand>
</feature>
<feature type="binding site" evidence="1">
    <location>
        <position position="79"/>
    </location>
    <ligand>
        <name>Na(+)</name>
        <dbReference type="ChEBI" id="CHEBI:29101"/>
        <note>structural</note>
    </ligand>
</feature>
<organism>
    <name type="scientific">Azotobacter vinelandii (strain DJ / ATCC BAA-1303)</name>
    <dbReference type="NCBI Taxonomy" id="322710"/>
    <lineage>
        <taxon>Bacteria</taxon>
        <taxon>Pseudomonadati</taxon>
        <taxon>Pseudomonadota</taxon>
        <taxon>Gammaproteobacteria</taxon>
        <taxon>Pseudomonadales</taxon>
        <taxon>Pseudomonadaceae</taxon>
        <taxon>Azotobacter</taxon>
    </lineage>
</organism>
<proteinExistence type="inferred from homology"/>
<comment type="function">
    <text evidence="1">Fluoride-specific ion channel. Important for reducing fluoride concentration in the cell, thus reducing its toxicity.</text>
</comment>
<comment type="catalytic activity">
    <reaction evidence="1">
        <text>fluoride(in) = fluoride(out)</text>
        <dbReference type="Rhea" id="RHEA:76159"/>
        <dbReference type="ChEBI" id="CHEBI:17051"/>
    </reaction>
    <physiologicalReaction direction="left-to-right" evidence="1">
        <dbReference type="Rhea" id="RHEA:76160"/>
    </physiologicalReaction>
</comment>
<comment type="activity regulation">
    <text evidence="1">Na(+) is not transported, but it plays an essential structural role and its presence is essential for fluoride channel function.</text>
</comment>
<comment type="subcellular location">
    <subcellularLocation>
        <location evidence="1">Cell inner membrane</location>
        <topology evidence="1">Multi-pass membrane protein</topology>
    </subcellularLocation>
</comment>
<comment type="similarity">
    <text evidence="1">Belongs to the fluoride channel Fluc/FEX (TC 1.A.43) family.</text>
</comment>